<evidence type="ECO:0000255" key="1">
    <source>
        <dbReference type="HAMAP-Rule" id="MF_00050"/>
    </source>
</evidence>
<sequence length="290" mass="32395">MKITASLVKKLRQRMGAGMMDCKKALNATNGNIEKAIDLMRTLNTTKSAKKLDRITIEGLVKINISANKKTVTILEVNSETDFVTKSDTFISFVNMLGVLALKTTPTNIEEFLSQPLSNGDSIEKAREEIIAKVGENITIRRVQTIKTNNGIIGTYKHMDRIAVVTILEKGDETLAKDIAMHIAATNPECITEAELSSDLLEREKAIFIEQSKKSGKPNNIIEKMIIGRMKKFVNGVTLYGQPFIKNHDTTIGKLMQLNNTQVKFFVRFEVGEGIEKKEKNFVDEVMAQI</sequence>
<keyword id="KW-0963">Cytoplasm</keyword>
<keyword id="KW-0251">Elongation factor</keyword>
<keyword id="KW-0648">Protein biosynthesis</keyword>
<keyword id="KW-1185">Reference proteome</keyword>
<gene>
    <name evidence="1" type="primary">tsf</name>
    <name type="ordered locus">COSY_0972</name>
</gene>
<organism>
    <name type="scientific">Vesicomyosocius okutanii subsp. Calyptogena okutanii (strain HA)</name>
    <dbReference type="NCBI Taxonomy" id="412965"/>
    <lineage>
        <taxon>Bacteria</taxon>
        <taxon>Pseudomonadati</taxon>
        <taxon>Pseudomonadota</taxon>
        <taxon>Gammaproteobacteria</taxon>
        <taxon>Candidatus Pseudothioglobaceae</taxon>
        <taxon>Candidatus Vesicomyosocius</taxon>
    </lineage>
</organism>
<feature type="chain" id="PRO_1000006203" description="Elongation factor Ts">
    <location>
        <begin position="1"/>
        <end position="290"/>
    </location>
</feature>
<feature type="region of interest" description="Involved in Mg(2+) ion dislocation from EF-Tu" evidence="1">
    <location>
        <begin position="81"/>
        <end position="84"/>
    </location>
</feature>
<dbReference type="EMBL" id="AP009247">
    <property type="protein sequence ID" value="BAF62071.1"/>
    <property type="molecule type" value="Genomic_DNA"/>
</dbReference>
<dbReference type="RefSeq" id="WP_011930340.1">
    <property type="nucleotide sequence ID" value="NC_009465.1"/>
</dbReference>
<dbReference type="SMR" id="A5CVF3"/>
<dbReference type="STRING" id="412965.COSY_0972"/>
<dbReference type="KEGG" id="vok:COSY_0972"/>
<dbReference type="eggNOG" id="COG0264">
    <property type="taxonomic scope" value="Bacteria"/>
</dbReference>
<dbReference type="HOGENOM" id="CLU_047155_0_2_6"/>
<dbReference type="OrthoDB" id="9808348at2"/>
<dbReference type="Proteomes" id="UP000000247">
    <property type="component" value="Chromosome"/>
</dbReference>
<dbReference type="GO" id="GO:0005737">
    <property type="term" value="C:cytoplasm"/>
    <property type="evidence" value="ECO:0007669"/>
    <property type="project" value="UniProtKB-SubCell"/>
</dbReference>
<dbReference type="GO" id="GO:0003746">
    <property type="term" value="F:translation elongation factor activity"/>
    <property type="evidence" value="ECO:0007669"/>
    <property type="project" value="UniProtKB-UniRule"/>
</dbReference>
<dbReference type="CDD" id="cd14275">
    <property type="entry name" value="UBA_EF-Ts"/>
    <property type="match status" value="1"/>
</dbReference>
<dbReference type="FunFam" id="1.10.286.20:FF:000001">
    <property type="entry name" value="Elongation factor Ts"/>
    <property type="match status" value="1"/>
</dbReference>
<dbReference type="FunFam" id="1.10.8.10:FF:000001">
    <property type="entry name" value="Elongation factor Ts"/>
    <property type="match status" value="1"/>
</dbReference>
<dbReference type="Gene3D" id="1.10.286.20">
    <property type="match status" value="1"/>
</dbReference>
<dbReference type="Gene3D" id="1.10.8.10">
    <property type="entry name" value="DNA helicase RuvA subunit, C-terminal domain"/>
    <property type="match status" value="1"/>
</dbReference>
<dbReference type="Gene3D" id="3.30.479.20">
    <property type="entry name" value="Elongation factor Ts, dimerisation domain"/>
    <property type="match status" value="2"/>
</dbReference>
<dbReference type="HAMAP" id="MF_00050">
    <property type="entry name" value="EF_Ts"/>
    <property type="match status" value="1"/>
</dbReference>
<dbReference type="InterPro" id="IPR036402">
    <property type="entry name" value="EF-Ts_dimer_sf"/>
</dbReference>
<dbReference type="InterPro" id="IPR001816">
    <property type="entry name" value="Transl_elong_EFTs/EF1B"/>
</dbReference>
<dbReference type="InterPro" id="IPR014039">
    <property type="entry name" value="Transl_elong_EFTs/EF1B_dimer"/>
</dbReference>
<dbReference type="InterPro" id="IPR018101">
    <property type="entry name" value="Transl_elong_Ts_CS"/>
</dbReference>
<dbReference type="InterPro" id="IPR009060">
    <property type="entry name" value="UBA-like_sf"/>
</dbReference>
<dbReference type="NCBIfam" id="TIGR00116">
    <property type="entry name" value="tsf"/>
    <property type="match status" value="1"/>
</dbReference>
<dbReference type="PANTHER" id="PTHR11741">
    <property type="entry name" value="ELONGATION FACTOR TS"/>
    <property type="match status" value="1"/>
</dbReference>
<dbReference type="PANTHER" id="PTHR11741:SF0">
    <property type="entry name" value="ELONGATION FACTOR TS, MITOCHONDRIAL"/>
    <property type="match status" value="1"/>
</dbReference>
<dbReference type="Pfam" id="PF00889">
    <property type="entry name" value="EF_TS"/>
    <property type="match status" value="1"/>
</dbReference>
<dbReference type="SUPFAM" id="SSF54713">
    <property type="entry name" value="Elongation factor Ts (EF-Ts), dimerisation domain"/>
    <property type="match status" value="2"/>
</dbReference>
<dbReference type="SUPFAM" id="SSF46934">
    <property type="entry name" value="UBA-like"/>
    <property type="match status" value="1"/>
</dbReference>
<dbReference type="PROSITE" id="PS01127">
    <property type="entry name" value="EF_TS_2"/>
    <property type="match status" value="1"/>
</dbReference>
<protein>
    <recommendedName>
        <fullName evidence="1">Elongation factor Ts</fullName>
        <shortName evidence="1">EF-Ts</shortName>
    </recommendedName>
</protein>
<comment type="function">
    <text evidence="1">Associates with the EF-Tu.GDP complex and induces the exchange of GDP to GTP. It remains bound to the aminoacyl-tRNA.EF-Tu.GTP complex up to the GTP hydrolysis stage on the ribosome.</text>
</comment>
<comment type="subcellular location">
    <subcellularLocation>
        <location evidence="1">Cytoplasm</location>
    </subcellularLocation>
</comment>
<comment type="similarity">
    <text evidence="1">Belongs to the EF-Ts family.</text>
</comment>
<accession>A5CVF3</accession>
<proteinExistence type="inferred from homology"/>
<reference key="1">
    <citation type="journal article" date="2007" name="Curr. Biol.">
        <title>Reduced genome of the thioautotrophic intracellular symbiont in a deep-sea clam, Calyptogena okutanii.</title>
        <authorList>
            <person name="Kuwahara H."/>
            <person name="Yoshida T."/>
            <person name="Takaki Y."/>
            <person name="Shimamura S."/>
            <person name="Nishi S."/>
            <person name="Harada M."/>
            <person name="Matsuyama K."/>
            <person name="Takishita K."/>
            <person name="Kawato M."/>
            <person name="Uematsu K."/>
            <person name="Fujiwara Y."/>
            <person name="Sato T."/>
            <person name="Kato C."/>
            <person name="Kitagawa M."/>
            <person name="Kato I."/>
            <person name="Maruyama T."/>
        </authorList>
    </citation>
    <scope>NUCLEOTIDE SEQUENCE [LARGE SCALE GENOMIC DNA]</scope>
    <source>
        <strain>HA</strain>
    </source>
</reference>
<name>EFTS_VESOH</name>